<sequence length="72" mass="8280">MAKQDVIELEGTVLDTLPNAMFKVELENGHEILAHVSGKIRMNYIRILPGDKVTVEMSPYDLTRGRITYRYK</sequence>
<evidence type="ECO:0000255" key="1">
    <source>
        <dbReference type="HAMAP-Rule" id="MF_00075"/>
    </source>
</evidence>
<organism>
    <name type="scientific">Staphylococcus aureus (strain Mu50 / ATCC 700699)</name>
    <dbReference type="NCBI Taxonomy" id="158878"/>
    <lineage>
        <taxon>Bacteria</taxon>
        <taxon>Bacillati</taxon>
        <taxon>Bacillota</taxon>
        <taxon>Bacilli</taxon>
        <taxon>Bacillales</taxon>
        <taxon>Staphylococcaceae</taxon>
        <taxon>Staphylococcus</taxon>
    </lineage>
</organism>
<dbReference type="EMBL" id="BA000017">
    <property type="protein sequence ID" value="BAB58390.1"/>
    <property type="molecule type" value="Genomic_DNA"/>
</dbReference>
<dbReference type="RefSeq" id="WP_001118443.1">
    <property type="nucleotide sequence ID" value="NC_002758.2"/>
</dbReference>
<dbReference type="SMR" id="P65118"/>
<dbReference type="GeneID" id="98346540"/>
<dbReference type="KEGG" id="sav:SAV2228"/>
<dbReference type="HOGENOM" id="CLU_151267_1_0_9"/>
<dbReference type="PhylomeDB" id="P65118"/>
<dbReference type="Proteomes" id="UP000002481">
    <property type="component" value="Chromosome"/>
</dbReference>
<dbReference type="GO" id="GO:0005829">
    <property type="term" value="C:cytosol"/>
    <property type="evidence" value="ECO:0007669"/>
    <property type="project" value="TreeGrafter"/>
</dbReference>
<dbReference type="GO" id="GO:0043022">
    <property type="term" value="F:ribosome binding"/>
    <property type="evidence" value="ECO:0007669"/>
    <property type="project" value="UniProtKB-UniRule"/>
</dbReference>
<dbReference type="GO" id="GO:0019843">
    <property type="term" value="F:rRNA binding"/>
    <property type="evidence" value="ECO:0007669"/>
    <property type="project" value="UniProtKB-UniRule"/>
</dbReference>
<dbReference type="GO" id="GO:0003743">
    <property type="term" value="F:translation initiation factor activity"/>
    <property type="evidence" value="ECO:0007669"/>
    <property type="project" value="UniProtKB-UniRule"/>
</dbReference>
<dbReference type="CDD" id="cd04451">
    <property type="entry name" value="S1_IF1"/>
    <property type="match status" value="1"/>
</dbReference>
<dbReference type="FunFam" id="2.40.50.140:FF:000002">
    <property type="entry name" value="Translation initiation factor IF-1"/>
    <property type="match status" value="1"/>
</dbReference>
<dbReference type="Gene3D" id="2.40.50.140">
    <property type="entry name" value="Nucleic acid-binding proteins"/>
    <property type="match status" value="1"/>
</dbReference>
<dbReference type="HAMAP" id="MF_00075">
    <property type="entry name" value="IF_1"/>
    <property type="match status" value="1"/>
</dbReference>
<dbReference type="InterPro" id="IPR012340">
    <property type="entry name" value="NA-bd_OB-fold"/>
</dbReference>
<dbReference type="InterPro" id="IPR006196">
    <property type="entry name" value="RNA-binding_domain_S1_IF1"/>
</dbReference>
<dbReference type="InterPro" id="IPR003029">
    <property type="entry name" value="S1_domain"/>
</dbReference>
<dbReference type="InterPro" id="IPR004368">
    <property type="entry name" value="TIF_IF1"/>
</dbReference>
<dbReference type="NCBIfam" id="TIGR00008">
    <property type="entry name" value="infA"/>
    <property type="match status" value="1"/>
</dbReference>
<dbReference type="PANTHER" id="PTHR33370">
    <property type="entry name" value="TRANSLATION INITIATION FACTOR IF-1, CHLOROPLASTIC"/>
    <property type="match status" value="1"/>
</dbReference>
<dbReference type="PANTHER" id="PTHR33370:SF1">
    <property type="entry name" value="TRANSLATION INITIATION FACTOR IF-1, CHLOROPLASTIC"/>
    <property type="match status" value="1"/>
</dbReference>
<dbReference type="Pfam" id="PF01176">
    <property type="entry name" value="eIF-1a"/>
    <property type="match status" value="1"/>
</dbReference>
<dbReference type="SMART" id="SM00316">
    <property type="entry name" value="S1"/>
    <property type="match status" value="1"/>
</dbReference>
<dbReference type="SUPFAM" id="SSF50249">
    <property type="entry name" value="Nucleic acid-binding proteins"/>
    <property type="match status" value="1"/>
</dbReference>
<dbReference type="PROSITE" id="PS50832">
    <property type="entry name" value="S1_IF1_TYPE"/>
    <property type="match status" value="1"/>
</dbReference>
<keyword id="KW-0963">Cytoplasm</keyword>
<keyword id="KW-0396">Initiation factor</keyword>
<keyword id="KW-0648">Protein biosynthesis</keyword>
<keyword id="KW-0694">RNA-binding</keyword>
<keyword id="KW-0699">rRNA-binding</keyword>
<accession>P65118</accession>
<accession>Q99S41</accession>
<reference key="1">
    <citation type="journal article" date="2001" name="Lancet">
        <title>Whole genome sequencing of meticillin-resistant Staphylococcus aureus.</title>
        <authorList>
            <person name="Kuroda M."/>
            <person name="Ohta T."/>
            <person name="Uchiyama I."/>
            <person name="Baba T."/>
            <person name="Yuzawa H."/>
            <person name="Kobayashi I."/>
            <person name="Cui L."/>
            <person name="Oguchi A."/>
            <person name="Aoki K."/>
            <person name="Nagai Y."/>
            <person name="Lian J.-Q."/>
            <person name="Ito T."/>
            <person name="Kanamori M."/>
            <person name="Matsumaru H."/>
            <person name="Maruyama A."/>
            <person name="Murakami H."/>
            <person name="Hosoyama A."/>
            <person name="Mizutani-Ui Y."/>
            <person name="Takahashi N.K."/>
            <person name="Sawano T."/>
            <person name="Inoue R."/>
            <person name="Kaito C."/>
            <person name="Sekimizu K."/>
            <person name="Hirakawa H."/>
            <person name="Kuhara S."/>
            <person name="Goto S."/>
            <person name="Yabuzaki J."/>
            <person name="Kanehisa M."/>
            <person name="Yamashita A."/>
            <person name="Oshima K."/>
            <person name="Furuya K."/>
            <person name="Yoshino C."/>
            <person name="Shiba T."/>
            <person name="Hattori M."/>
            <person name="Ogasawara N."/>
            <person name="Hayashi H."/>
            <person name="Hiramatsu K."/>
        </authorList>
    </citation>
    <scope>NUCLEOTIDE SEQUENCE [LARGE SCALE GENOMIC DNA]</scope>
    <source>
        <strain>Mu50 / ATCC 700699</strain>
    </source>
</reference>
<feature type="chain" id="PRO_0000095866" description="Translation initiation factor IF-1">
    <location>
        <begin position="1"/>
        <end position="72"/>
    </location>
</feature>
<feature type="domain" description="S1-like" evidence="1">
    <location>
        <begin position="1"/>
        <end position="72"/>
    </location>
</feature>
<name>IF1_STAAM</name>
<protein>
    <recommendedName>
        <fullName evidence="1">Translation initiation factor IF-1</fullName>
    </recommendedName>
</protein>
<comment type="function">
    <text evidence="1">One of the essential components for the initiation of protein synthesis. Stabilizes the binding of IF-2 and IF-3 on the 30S subunit to which N-formylmethionyl-tRNA(fMet) subsequently binds. Helps modulate mRNA selection, yielding the 30S pre-initiation complex (PIC). Upon addition of the 50S ribosomal subunit IF-1, IF-2 and IF-3 are released leaving the mature 70S translation initiation complex.</text>
</comment>
<comment type="subunit">
    <text evidence="1">Component of the 30S ribosomal translation pre-initiation complex which assembles on the 30S ribosome in the order IF-2 and IF-3, IF-1 and N-formylmethionyl-tRNA(fMet); mRNA recruitment can occur at any time during PIC assembly.</text>
</comment>
<comment type="subcellular location">
    <subcellularLocation>
        <location evidence="1">Cytoplasm</location>
    </subcellularLocation>
</comment>
<comment type="similarity">
    <text evidence="1">Belongs to the IF-1 family.</text>
</comment>
<proteinExistence type="inferred from homology"/>
<gene>
    <name evidence="1" type="primary">infA</name>
    <name type="ordered locus">SAV2228</name>
</gene>